<sequence>MNKVLIIGSGFSGATIARLLAEENIKVKIIDDRKHIGGNCYDERDEKTGINVHVYGPHIFHTDNEDVWNFVNKYGTFQPYTTRLKANAKGQIYSLPVNLHTINQYYKTALSPTEARKLIASKGDQTINDPQSFEEQALKFVGEDLYKTFFYGYPKKQWGMEPKEIPASVLKRLPVRFNYDDNYFFHKFQGIPRDGYTPLFQNLLNHPNIEFELGKKVNRATVEELITSEQYGHVFFSGAIDHFYDYEFGMLQYRTLDFEKFYSEDDDYQGCVVMSYCDEDVPYTRVTEHKYFTPWEEHKGSVLYKEFSRSCDKEDIPYYPVRLVSGNSIWNKYEQKAKEETNITFIGRLATYRYLDMDVCIKEAIECAQLYIKNNKE</sequence>
<gene>
    <name type="primary">fcf2</name>
</gene>
<dbReference type="EC" id="5.4.99.59"/>
<dbReference type="EMBL" id="AY528413">
    <property type="protein sequence ID" value="AAS99162.1"/>
    <property type="molecule type" value="Genomic_DNA"/>
</dbReference>
<dbReference type="SMR" id="Q6E7F1"/>
<dbReference type="KEGG" id="ag:AAS99162"/>
<dbReference type="BioCyc" id="MetaCyc:MONOMER-18131"/>
<dbReference type="BRENDA" id="5.4.99.59">
    <property type="organism ID" value="2026"/>
</dbReference>
<dbReference type="UniPathway" id="UPA00281"/>
<dbReference type="GO" id="GO:0005829">
    <property type="term" value="C:cytosol"/>
    <property type="evidence" value="ECO:0007669"/>
    <property type="project" value="TreeGrafter"/>
</dbReference>
<dbReference type="GO" id="GO:0050660">
    <property type="term" value="F:flavin adenine dinucleotide binding"/>
    <property type="evidence" value="ECO:0007669"/>
    <property type="project" value="TreeGrafter"/>
</dbReference>
<dbReference type="GO" id="GO:0016866">
    <property type="term" value="F:intramolecular transferase activity"/>
    <property type="evidence" value="ECO:0000314"/>
    <property type="project" value="UniProtKB"/>
</dbReference>
<dbReference type="GO" id="GO:0048029">
    <property type="term" value="F:monosaccharide binding"/>
    <property type="evidence" value="ECO:0000314"/>
    <property type="project" value="UniProtKB"/>
</dbReference>
<dbReference type="GO" id="GO:0008767">
    <property type="term" value="F:UDP-galactopyranose mutase activity"/>
    <property type="evidence" value="ECO:0007669"/>
    <property type="project" value="InterPro"/>
</dbReference>
<dbReference type="GO" id="GO:0042353">
    <property type="term" value="P:fucose biosynthetic process"/>
    <property type="evidence" value="ECO:0000314"/>
    <property type="project" value="UniProtKB"/>
</dbReference>
<dbReference type="GO" id="GO:0009243">
    <property type="term" value="P:O antigen biosynthetic process"/>
    <property type="evidence" value="ECO:0000315"/>
    <property type="project" value="UniProtKB"/>
</dbReference>
<dbReference type="Gene3D" id="3.40.50.720">
    <property type="entry name" value="NAD(P)-binding Rossmann-like Domain"/>
    <property type="match status" value="3"/>
</dbReference>
<dbReference type="InterPro" id="IPR004379">
    <property type="entry name" value="UDP-GALP_mutase"/>
</dbReference>
<dbReference type="InterPro" id="IPR015899">
    <property type="entry name" value="UDP-GalPyranose_mutase_C"/>
</dbReference>
<dbReference type="NCBIfam" id="TIGR00031">
    <property type="entry name" value="UDP-GALP_mutase"/>
    <property type="match status" value="1"/>
</dbReference>
<dbReference type="PANTHER" id="PTHR21197">
    <property type="entry name" value="UDP-GALACTOPYRANOSE MUTASE"/>
    <property type="match status" value="1"/>
</dbReference>
<dbReference type="PANTHER" id="PTHR21197:SF0">
    <property type="entry name" value="UDP-GALACTOPYRANOSE MUTASE"/>
    <property type="match status" value="1"/>
</dbReference>
<dbReference type="Pfam" id="PF03275">
    <property type="entry name" value="GLF"/>
    <property type="match status" value="1"/>
</dbReference>
<dbReference type="Pfam" id="PF13450">
    <property type="entry name" value="NAD_binding_8"/>
    <property type="match status" value="1"/>
</dbReference>
<dbReference type="SUPFAM" id="SSF54373">
    <property type="entry name" value="FAD-linked reductases, C-terminal domain"/>
    <property type="match status" value="1"/>
</dbReference>
<dbReference type="SUPFAM" id="SSF51971">
    <property type="entry name" value="Nucleotide-binding domain"/>
    <property type="match status" value="1"/>
</dbReference>
<keyword id="KW-0119">Carbohydrate metabolism</keyword>
<keyword id="KW-0274">FAD</keyword>
<keyword id="KW-0285">Flavoprotein</keyword>
<keyword id="KW-0413">Isomerase</keyword>
<keyword id="KW-0448">Lipopolysaccharide biosynthesis</keyword>
<feature type="chain" id="PRO_0000425109" description="dTDP-fucopyranose mutase">
    <location>
        <begin position="1"/>
        <end position="377"/>
    </location>
</feature>
<feature type="binding site" evidence="1">
    <location>
        <position position="12"/>
    </location>
    <ligand>
        <name>FAD</name>
        <dbReference type="ChEBI" id="CHEBI:57692"/>
    </ligand>
</feature>
<feature type="binding site" evidence="1">
    <location>
        <begin position="31"/>
        <end position="32"/>
    </location>
    <ligand>
        <name>FAD</name>
        <dbReference type="ChEBI" id="CHEBI:57692"/>
    </ligand>
</feature>
<feature type="binding site" evidence="1">
    <location>
        <position position="39"/>
    </location>
    <ligand>
        <name>FAD</name>
        <dbReference type="ChEBI" id="CHEBI:57692"/>
    </ligand>
</feature>
<feature type="binding site" evidence="1">
    <location>
        <begin position="58"/>
        <end position="59"/>
    </location>
    <ligand>
        <name>FAD</name>
        <dbReference type="ChEBI" id="CHEBI:57692"/>
    </ligand>
</feature>
<feature type="binding site" evidence="1">
    <location>
        <position position="348"/>
    </location>
    <ligand>
        <name>FAD</name>
        <dbReference type="ChEBI" id="CHEBI:57692"/>
    </ligand>
</feature>
<feature type="binding site" evidence="1">
    <location>
        <begin position="355"/>
        <end position="360"/>
    </location>
    <ligand>
        <name>FAD</name>
        <dbReference type="ChEBI" id="CHEBI:57692"/>
    </ligand>
</feature>
<organism>
    <name type="scientific">Escherichia coli</name>
    <dbReference type="NCBI Taxonomy" id="562"/>
    <lineage>
        <taxon>Bacteria</taxon>
        <taxon>Pseudomonadati</taxon>
        <taxon>Pseudomonadota</taxon>
        <taxon>Gammaproteobacteria</taxon>
        <taxon>Enterobacterales</taxon>
        <taxon>Enterobacteriaceae</taxon>
        <taxon>Escherichia</taxon>
    </lineage>
</organism>
<proteinExistence type="evidence at protein level"/>
<evidence type="ECO:0000250" key="1"/>
<evidence type="ECO:0000269" key="2">
    <source>
    </source>
</evidence>
<evidence type="ECO:0000305" key="3"/>
<protein>
    <recommendedName>
        <fullName>dTDP-fucopyranose mutase</fullName>
        <ecNumber>5.4.99.59</ecNumber>
    </recommendedName>
    <alternativeName>
        <fullName>dTDP-alpha-D-fucopyranose mutase</fullName>
    </alternativeName>
</protein>
<comment type="function">
    <text evidence="2">Catalyzes the conversion of dTDP-alpha-D-fucopyranose to dTDP-alpha-D-fucofuranose. This is a step in the biosynthesis of D-fucofuranose, a component of E.coli O52 O antigen.</text>
</comment>
<comment type="catalytic activity">
    <reaction evidence="2">
        <text>dTDP-alpha-D-fucose = dTDP-alpha-D-fucofuranose</text>
        <dbReference type="Rhea" id="RHEA:36815"/>
        <dbReference type="ChEBI" id="CHEBI:73933"/>
        <dbReference type="ChEBI" id="CHEBI:76275"/>
        <dbReference type="EC" id="5.4.99.59"/>
    </reaction>
</comment>
<comment type="cofactor">
    <cofactor evidence="1">
        <name>FAD</name>
        <dbReference type="ChEBI" id="CHEBI:57692"/>
    </cofactor>
    <text evidence="1">Binds 1 FAD per subunit.</text>
</comment>
<comment type="activity regulation">
    <text evidence="2">Inhibited by Cu(2+), while other divalent cations such as Ca(2+), Co(2+), Fe(2+) and Mg(2+) have no obvious effects on enzyme activity.</text>
</comment>
<comment type="biophysicochemical properties">
    <kinetics>
        <KM evidence="2">3.43 mM for dTDP-alpha-D-fucopyranose</KM>
        <text>kcat is 3.3 min(-1).</text>
    </kinetics>
    <temperatureDependence>
        <text evidence="2">Optimum temperature is 15-37 degrees Celsius.</text>
    </temperatureDependence>
</comment>
<comment type="pathway">
    <text evidence="2">Bacterial outer membrane biogenesis; LPS O-antigen biosynthesis.</text>
</comment>
<comment type="disruption phenotype">
    <text evidence="2">Cells lacking this gene produce semirough (SR-type) LPS with only one O unit attached to the core-lipid A moiety while the wild-type strain produces normal LPS.</text>
</comment>
<comment type="similarity">
    <text evidence="3">Belongs to the UDP-galactopyranose/dTDP-fucopyranose mutase family.</text>
</comment>
<reference key="1">
    <citation type="journal article" date="2004" name="J. Bacteriol.">
        <title>Synthesis of the heteropolysaccharide O antigen of Escherichia coli O52 requires an ABC transporter: structural and genetic evidence.</title>
        <authorList>
            <person name="Feng L."/>
            <person name="Senchenkova S.N."/>
            <person name="Yang J."/>
            <person name="Shashkov A.S."/>
            <person name="Tao J."/>
            <person name="Guo H."/>
            <person name="Cheng J."/>
            <person name="Ren Y."/>
            <person name="Knirel Y.A."/>
            <person name="Reeves P.R."/>
            <person name="Wang L."/>
        </authorList>
    </citation>
    <scope>NUCLEOTIDE SEQUENCE [GENOMIC DNA]</scope>
    <source>
        <strain>O52 / G1066</strain>
    </source>
</reference>
<reference key="2">
    <citation type="journal article" date="2008" name="Mol. Microbiol.">
        <title>Characterization of the dTDP-D-fucofuranose biosynthetic pathway in Escherichia coli O52.</title>
        <authorList>
            <person name="Wang Q."/>
            <person name="Ding P."/>
            <person name="Perepelov A.V."/>
            <person name="Xu Y."/>
            <person name="Wang Y."/>
            <person name="Knirel Y.A."/>
            <person name="Wang L."/>
            <person name="Feng L."/>
        </authorList>
    </citation>
    <scope>FUNCTION</scope>
    <scope>CATALYTIC ACTIVITY</scope>
    <scope>ROLE IN O ANTIGEN BIOSYNTHESIS</scope>
    <scope>BIOPHYSICOCHEMICAL PROPERTIES</scope>
    <scope>ACTIVITY REGULATION</scope>
    <scope>PATHWAY</scope>
    <scope>DISRUPTION PHENOTYPE</scope>
    <source>
        <strain>O52 / G1066</strain>
    </source>
</reference>
<name>FCF2_ECOLX</name>
<accession>Q6E7F1</accession>